<reference key="1">
    <citation type="journal article" date="2006" name="Mol. Microbiol.">
        <title>Role of pathogenicity island-associated integrases in the genome plasticity of uropathogenic Escherichia coli strain 536.</title>
        <authorList>
            <person name="Hochhut B."/>
            <person name="Wilde C."/>
            <person name="Balling G."/>
            <person name="Middendorf B."/>
            <person name="Dobrindt U."/>
            <person name="Brzuszkiewicz E."/>
            <person name="Gottschalk G."/>
            <person name="Carniel E."/>
            <person name="Hacker J."/>
        </authorList>
    </citation>
    <scope>NUCLEOTIDE SEQUENCE [LARGE SCALE GENOMIC DNA]</scope>
    <source>
        <strain>536 / UPEC</strain>
    </source>
</reference>
<name>SYT_ECOL5</name>
<keyword id="KW-0007">Acetylation</keyword>
<keyword id="KW-0030">Aminoacyl-tRNA synthetase</keyword>
<keyword id="KW-0067">ATP-binding</keyword>
<keyword id="KW-0963">Cytoplasm</keyword>
<keyword id="KW-0436">Ligase</keyword>
<keyword id="KW-0479">Metal-binding</keyword>
<keyword id="KW-0547">Nucleotide-binding</keyword>
<keyword id="KW-0648">Protein biosynthesis</keyword>
<keyword id="KW-0694">RNA-binding</keyword>
<keyword id="KW-0820">tRNA-binding</keyword>
<keyword id="KW-0862">Zinc</keyword>
<accession>Q0THB0</accession>
<proteinExistence type="inferred from homology"/>
<evidence type="ECO:0000255" key="1">
    <source>
        <dbReference type="HAMAP-Rule" id="MF_00184"/>
    </source>
</evidence>
<evidence type="ECO:0000255" key="2">
    <source>
        <dbReference type="PROSITE-ProRule" id="PRU01228"/>
    </source>
</evidence>
<sequence>MPVITLPDGSQRHYDHAVSPMDVALDIGPGLAKACIAGRVNGELVDACDLIENDAQLSIITAKDEEGLEIIRHSCAHLLGHAIKQLWPHTKMAIGPVIDNGFYYDVDLDRTLTQEDVEALEKRMHELAEKNYDVIKKKVSWHEARETFANRGESYKVSILDENIAHDDKPGLYFHEEYVDMCRGPHVPNMRFCHHFKLMKTAGAYWRGDSNNKMLQRIYGTAWADKKALNAYLQRLEEAAKRDHRKIGKQLDLYHMQEEAPGMVFWHNDGWTIFRELEVFVRSKLKEYQYQEVKGPFMMDRVLWEKTGHWDNYKDAMFTTSSENREYCIKPMNCPGHVQIFNQGLKSYRDLPLRMAEFGSCHRNEPSGSLHGLMRVRGFTQDDAHIFCTEEQIRDEVNGCIRLVYDMYSTFGFEKIVVKLSTRPEKRIGSDEMWDRAEADLAVALEENNIPFEYQLGEGAFYGPKIEFTLYDCLDRAWQCGTVQLDFSLPSRLSASYVGEDNERKVPVMIHRAILGSMERFIGILTEEFAGFFPTWLAPVQVVIMNITDSQSEYVNELTQKLSNAGIRVKADLRNEKIGFKIREHTLRRVPYMLVCGDKEVESGKVAVRTRRGKDLGSMDVNEVIEKLQQEIRSRSLKQLEE</sequence>
<comment type="function">
    <text evidence="1">Catalyzes the attachment of threonine to tRNA(Thr) in a two-step reaction: L-threonine is first activated by ATP to form Thr-AMP and then transferred to the acceptor end of tRNA(Thr). Also edits incorrectly charged L-seryl-tRNA(Thr).</text>
</comment>
<comment type="catalytic activity">
    <reaction evidence="1">
        <text>tRNA(Thr) + L-threonine + ATP = L-threonyl-tRNA(Thr) + AMP + diphosphate + H(+)</text>
        <dbReference type="Rhea" id="RHEA:24624"/>
        <dbReference type="Rhea" id="RHEA-COMP:9670"/>
        <dbReference type="Rhea" id="RHEA-COMP:9704"/>
        <dbReference type="ChEBI" id="CHEBI:15378"/>
        <dbReference type="ChEBI" id="CHEBI:30616"/>
        <dbReference type="ChEBI" id="CHEBI:33019"/>
        <dbReference type="ChEBI" id="CHEBI:57926"/>
        <dbReference type="ChEBI" id="CHEBI:78442"/>
        <dbReference type="ChEBI" id="CHEBI:78534"/>
        <dbReference type="ChEBI" id="CHEBI:456215"/>
        <dbReference type="EC" id="6.1.1.3"/>
    </reaction>
</comment>
<comment type="cofactor">
    <cofactor evidence="1">
        <name>Zn(2+)</name>
        <dbReference type="ChEBI" id="CHEBI:29105"/>
    </cofactor>
    <text evidence="1">Binds 1 zinc ion per subunit.</text>
</comment>
<comment type="subunit">
    <text evidence="1">Homodimer.</text>
</comment>
<comment type="subcellular location">
    <subcellularLocation>
        <location evidence="1">Cytoplasm</location>
    </subcellularLocation>
</comment>
<comment type="similarity">
    <text evidence="1">Belongs to the class-II aminoacyl-tRNA synthetase family.</text>
</comment>
<dbReference type="EC" id="6.1.1.3" evidence="1"/>
<dbReference type="EMBL" id="CP000247">
    <property type="protein sequence ID" value="ABG69669.1"/>
    <property type="molecule type" value="Genomic_DNA"/>
</dbReference>
<dbReference type="RefSeq" id="WP_001144202.1">
    <property type="nucleotide sequence ID" value="NC_008253.1"/>
</dbReference>
<dbReference type="SMR" id="Q0THB0"/>
<dbReference type="GeneID" id="93775932"/>
<dbReference type="KEGG" id="ecp:ECP_1666"/>
<dbReference type="HOGENOM" id="CLU_008554_0_1_6"/>
<dbReference type="Proteomes" id="UP000009182">
    <property type="component" value="Chromosome"/>
</dbReference>
<dbReference type="GO" id="GO:0005829">
    <property type="term" value="C:cytosol"/>
    <property type="evidence" value="ECO:0007669"/>
    <property type="project" value="TreeGrafter"/>
</dbReference>
<dbReference type="GO" id="GO:0005524">
    <property type="term" value="F:ATP binding"/>
    <property type="evidence" value="ECO:0007669"/>
    <property type="project" value="UniProtKB-UniRule"/>
</dbReference>
<dbReference type="GO" id="GO:0046872">
    <property type="term" value="F:metal ion binding"/>
    <property type="evidence" value="ECO:0007669"/>
    <property type="project" value="UniProtKB-KW"/>
</dbReference>
<dbReference type="GO" id="GO:0004829">
    <property type="term" value="F:threonine-tRNA ligase activity"/>
    <property type="evidence" value="ECO:0007669"/>
    <property type="project" value="UniProtKB-UniRule"/>
</dbReference>
<dbReference type="GO" id="GO:0000049">
    <property type="term" value="F:tRNA binding"/>
    <property type="evidence" value="ECO:0007669"/>
    <property type="project" value="UniProtKB-KW"/>
</dbReference>
<dbReference type="GO" id="GO:0006435">
    <property type="term" value="P:threonyl-tRNA aminoacylation"/>
    <property type="evidence" value="ECO:0007669"/>
    <property type="project" value="UniProtKB-UniRule"/>
</dbReference>
<dbReference type="CDD" id="cd01667">
    <property type="entry name" value="TGS_ThrRS"/>
    <property type="match status" value="1"/>
</dbReference>
<dbReference type="CDD" id="cd00860">
    <property type="entry name" value="ThrRS_anticodon"/>
    <property type="match status" value="1"/>
</dbReference>
<dbReference type="CDD" id="cd00771">
    <property type="entry name" value="ThrRS_core"/>
    <property type="match status" value="1"/>
</dbReference>
<dbReference type="FunFam" id="3.10.20.30:FF:000005">
    <property type="entry name" value="Threonine--tRNA ligase"/>
    <property type="match status" value="1"/>
</dbReference>
<dbReference type="FunFam" id="3.30.54.20:FF:000002">
    <property type="entry name" value="Threonine--tRNA ligase"/>
    <property type="match status" value="1"/>
</dbReference>
<dbReference type="FunFam" id="3.30.930.10:FF:000002">
    <property type="entry name" value="Threonine--tRNA ligase"/>
    <property type="match status" value="1"/>
</dbReference>
<dbReference type="FunFam" id="3.40.50.800:FF:000001">
    <property type="entry name" value="Threonine--tRNA ligase"/>
    <property type="match status" value="1"/>
</dbReference>
<dbReference type="FunFam" id="3.30.980.10:FF:000005">
    <property type="entry name" value="Threonyl-tRNA synthetase, mitochondrial"/>
    <property type="match status" value="1"/>
</dbReference>
<dbReference type="Gene3D" id="3.10.20.30">
    <property type="match status" value="1"/>
</dbReference>
<dbReference type="Gene3D" id="3.30.54.20">
    <property type="match status" value="1"/>
</dbReference>
<dbReference type="Gene3D" id="3.40.50.800">
    <property type="entry name" value="Anticodon-binding domain"/>
    <property type="match status" value="1"/>
</dbReference>
<dbReference type="Gene3D" id="3.30.930.10">
    <property type="entry name" value="Bira Bifunctional Protein, Domain 2"/>
    <property type="match status" value="1"/>
</dbReference>
<dbReference type="Gene3D" id="3.30.980.10">
    <property type="entry name" value="Threonyl-trna Synthetase, Chain A, domain 2"/>
    <property type="match status" value="1"/>
</dbReference>
<dbReference type="HAMAP" id="MF_00184">
    <property type="entry name" value="Thr_tRNA_synth"/>
    <property type="match status" value="1"/>
</dbReference>
<dbReference type="InterPro" id="IPR002314">
    <property type="entry name" value="aa-tRNA-synt_IIb"/>
</dbReference>
<dbReference type="InterPro" id="IPR006195">
    <property type="entry name" value="aa-tRNA-synth_II"/>
</dbReference>
<dbReference type="InterPro" id="IPR045864">
    <property type="entry name" value="aa-tRNA-synth_II/BPL/LPL"/>
</dbReference>
<dbReference type="InterPro" id="IPR004154">
    <property type="entry name" value="Anticodon-bd"/>
</dbReference>
<dbReference type="InterPro" id="IPR036621">
    <property type="entry name" value="Anticodon-bd_dom_sf"/>
</dbReference>
<dbReference type="InterPro" id="IPR012675">
    <property type="entry name" value="Beta-grasp_dom_sf"/>
</dbReference>
<dbReference type="InterPro" id="IPR004095">
    <property type="entry name" value="TGS"/>
</dbReference>
<dbReference type="InterPro" id="IPR012676">
    <property type="entry name" value="TGS-like"/>
</dbReference>
<dbReference type="InterPro" id="IPR002320">
    <property type="entry name" value="Thr-tRNA-ligase_IIa"/>
</dbReference>
<dbReference type="InterPro" id="IPR018163">
    <property type="entry name" value="Thr/Ala-tRNA-synth_IIc_edit"/>
</dbReference>
<dbReference type="InterPro" id="IPR047246">
    <property type="entry name" value="ThrRS_anticodon"/>
</dbReference>
<dbReference type="InterPro" id="IPR033728">
    <property type="entry name" value="ThrRS_core"/>
</dbReference>
<dbReference type="InterPro" id="IPR012947">
    <property type="entry name" value="tRNA_SAD"/>
</dbReference>
<dbReference type="NCBIfam" id="TIGR00418">
    <property type="entry name" value="thrS"/>
    <property type="match status" value="1"/>
</dbReference>
<dbReference type="PANTHER" id="PTHR11451:SF44">
    <property type="entry name" value="THREONINE--TRNA LIGASE, CHLOROPLASTIC_MITOCHONDRIAL 2"/>
    <property type="match status" value="1"/>
</dbReference>
<dbReference type="PANTHER" id="PTHR11451">
    <property type="entry name" value="THREONINE-TRNA LIGASE"/>
    <property type="match status" value="1"/>
</dbReference>
<dbReference type="Pfam" id="PF03129">
    <property type="entry name" value="HGTP_anticodon"/>
    <property type="match status" value="1"/>
</dbReference>
<dbReference type="Pfam" id="PF02824">
    <property type="entry name" value="TGS"/>
    <property type="match status" value="1"/>
</dbReference>
<dbReference type="Pfam" id="PF00587">
    <property type="entry name" value="tRNA-synt_2b"/>
    <property type="match status" value="1"/>
</dbReference>
<dbReference type="Pfam" id="PF07973">
    <property type="entry name" value="tRNA_SAD"/>
    <property type="match status" value="1"/>
</dbReference>
<dbReference type="PRINTS" id="PR01047">
    <property type="entry name" value="TRNASYNTHTHR"/>
</dbReference>
<dbReference type="SMART" id="SM00863">
    <property type="entry name" value="tRNA_SAD"/>
    <property type="match status" value="1"/>
</dbReference>
<dbReference type="SUPFAM" id="SSF52954">
    <property type="entry name" value="Class II aaRS ABD-related"/>
    <property type="match status" value="1"/>
</dbReference>
<dbReference type="SUPFAM" id="SSF55681">
    <property type="entry name" value="Class II aaRS and biotin synthetases"/>
    <property type="match status" value="1"/>
</dbReference>
<dbReference type="SUPFAM" id="SSF81271">
    <property type="entry name" value="TGS-like"/>
    <property type="match status" value="1"/>
</dbReference>
<dbReference type="SUPFAM" id="SSF55186">
    <property type="entry name" value="ThrRS/AlaRS common domain"/>
    <property type="match status" value="1"/>
</dbReference>
<dbReference type="PROSITE" id="PS50862">
    <property type="entry name" value="AA_TRNA_LIGASE_II"/>
    <property type="match status" value="1"/>
</dbReference>
<dbReference type="PROSITE" id="PS51880">
    <property type="entry name" value="TGS"/>
    <property type="match status" value="1"/>
</dbReference>
<organism>
    <name type="scientific">Escherichia coli O6:K15:H31 (strain 536 / UPEC)</name>
    <dbReference type="NCBI Taxonomy" id="362663"/>
    <lineage>
        <taxon>Bacteria</taxon>
        <taxon>Pseudomonadati</taxon>
        <taxon>Pseudomonadota</taxon>
        <taxon>Gammaproteobacteria</taxon>
        <taxon>Enterobacterales</taxon>
        <taxon>Enterobacteriaceae</taxon>
        <taxon>Escherichia</taxon>
    </lineage>
</organism>
<protein>
    <recommendedName>
        <fullName evidence="1">Threonine--tRNA ligase</fullName>
        <ecNumber evidence="1">6.1.1.3</ecNumber>
    </recommendedName>
    <alternativeName>
        <fullName evidence="1">Threonyl-tRNA synthetase</fullName>
        <shortName evidence="1">ThrRS</shortName>
    </alternativeName>
</protein>
<feature type="chain" id="PRO_1000020384" description="Threonine--tRNA ligase">
    <location>
        <begin position="1"/>
        <end position="642"/>
    </location>
</feature>
<feature type="domain" description="TGS" evidence="2">
    <location>
        <begin position="1"/>
        <end position="61"/>
    </location>
</feature>
<feature type="region of interest" description="Catalytic" evidence="1">
    <location>
        <begin position="243"/>
        <end position="534"/>
    </location>
</feature>
<feature type="binding site" evidence="1">
    <location>
        <position position="334"/>
    </location>
    <ligand>
        <name>Zn(2+)</name>
        <dbReference type="ChEBI" id="CHEBI:29105"/>
    </ligand>
</feature>
<feature type="binding site" evidence="1">
    <location>
        <position position="385"/>
    </location>
    <ligand>
        <name>Zn(2+)</name>
        <dbReference type="ChEBI" id="CHEBI:29105"/>
    </ligand>
</feature>
<feature type="binding site" evidence="1">
    <location>
        <position position="511"/>
    </location>
    <ligand>
        <name>Zn(2+)</name>
        <dbReference type="ChEBI" id="CHEBI:29105"/>
    </ligand>
</feature>
<feature type="modified residue" description="N6-acetyllysine" evidence="1">
    <location>
        <position position="286"/>
    </location>
</feature>
<gene>
    <name evidence="1" type="primary">thrS</name>
    <name type="ordered locus">ECP_1666</name>
</gene>